<organism>
    <name type="scientific">Aspergillus flavus (strain ATCC 200026 / FGSC A1120 / IAM 13836 / NRRL 3357 / JCM 12722 / SRRC 167)</name>
    <dbReference type="NCBI Taxonomy" id="332952"/>
    <lineage>
        <taxon>Eukaryota</taxon>
        <taxon>Fungi</taxon>
        <taxon>Dikarya</taxon>
        <taxon>Ascomycota</taxon>
        <taxon>Pezizomycotina</taxon>
        <taxon>Eurotiomycetes</taxon>
        <taxon>Eurotiomycetidae</taxon>
        <taxon>Eurotiales</taxon>
        <taxon>Aspergillaceae</taxon>
        <taxon>Aspergillus</taxon>
        <taxon>Aspergillus subgen. Circumdati</taxon>
    </lineage>
</organism>
<name>NOP9_ASPFN</name>
<comment type="function">
    <text evidence="1">RNA-binding nucleolar protein required for pre-rRNA processing. Involved in production of 18S rRNA and assembly of small ribosomal subunit (By similarity).</text>
</comment>
<comment type="subcellular location">
    <subcellularLocation>
        <location evidence="1">Nucleus</location>
        <location evidence="1">Nucleolus</location>
    </subcellularLocation>
</comment>
<comment type="similarity">
    <text evidence="3">Belongs to the NOP9 family.</text>
</comment>
<accession>B8N3R8</accession>
<keyword id="KW-0539">Nucleus</keyword>
<keyword id="KW-0677">Repeat</keyword>
<keyword id="KW-0690">Ribosome biogenesis</keyword>
<keyword id="KW-0698">rRNA processing</keyword>
<reference key="1">
    <citation type="journal article" date="2015" name="Genome Announc.">
        <title>Genome sequence of Aspergillus flavus NRRL 3357, a strain that causes aflatoxin contamination of food and feed.</title>
        <authorList>
            <person name="Nierman W.C."/>
            <person name="Yu J."/>
            <person name="Fedorova-Abrams N.D."/>
            <person name="Losada L."/>
            <person name="Cleveland T.E."/>
            <person name="Bhatnagar D."/>
            <person name="Bennett J.W."/>
            <person name="Dean R."/>
            <person name="Payne G.A."/>
        </authorList>
    </citation>
    <scope>NUCLEOTIDE SEQUENCE [LARGE SCALE GENOMIC DNA]</scope>
    <source>
        <strain>ATCC 200026 / FGSC A1120 / IAM 13836 / NRRL 3357 / JCM 12722 / SRRC 167</strain>
    </source>
</reference>
<sequence>MPRENQKRGRRAAEKAEKDAAKRKREEVPEDSLPKRLKPSTDESTEINQGADYIPFDENYNENYDGNYDENQADAPAGDMPFYGLLDPEEQEYFSRANEVLELNQFQDAEERRIFIDSVYKEANGKELKIACSQGCSRLMEKLISMSDMRQIHRLFNKFIGHFMNLVQHRFASHCCETLFINAAPGVTQKVSKSKSDKMDVDEEEGEEPEPELSLAEMFIKVVEELEGNWGYLLTERFASHTIRVLLLVLAGEPVDVSANDSVVASRKKEKLGLPQGETQDGDVSAQKRSVPDVFEATLKKIMKDIVSVLDDTYLRALATHPVGNPVLQVLVSLELSHFGKSSAKDPNSITRRLIPDESFEEGSETTTFVRGLLYDPVGSRLLETIVRCMPGKAFKGLYKNFIRDQITSLARNITAGYVVLRVLERLGKDDLQNALERIVPQVPSLLERSRMVVPKVLIERCLVRGVDTAPLARALEEAYDKDPARRLEQILRLESTTQEDLEESEQKPKGPNAAPSQSSTGEKLHGSLLAQTMLTAPGPISGLIYSSLLAQSSESLVKIAKDPTASRVLQQALTVPTSSAQFRRQFAPRFTSHLKELALDSSGSHVVDALWPATKDIFFIKERMAQELTQHEMALRDSFVGRAVWRNWAMDLYKRRRGEWAMKAKGIDNNNGSGERPKSRIELARAKFAAKAEEDAKKGAQKGVTA</sequence>
<dbReference type="EMBL" id="EQ963473">
    <property type="protein sequence ID" value="EED55880.1"/>
    <property type="molecule type" value="Genomic_DNA"/>
</dbReference>
<dbReference type="RefSeq" id="XP_002374662.1">
    <property type="nucleotide sequence ID" value="XM_002374621.1"/>
</dbReference>
<dbReference type="SMR" id="B8N3R8"/>
<dbReference type="STRING" id="332952.B8N3R8"/>
<dbReference type="EnsemblFungi" id="EED55880">
    <property type="protein sequence ID" value="EED55880"/>
    <property type="gene ID" value="AFLA_031520"/>
</dbReference>
<dbReference type="VEuPathDB" id="FungiDB:AFLA_001024"/>
<dbReference type="eggNOG" id="KOG2188">
    <property type="taxonomic scope" value="Eukaryota"/>
</dbReference>
<dbReference type="HOGENOM" id="CLU_008720_1_1_1"/>
<dbReference type="OMA" id="HHLVRNF"/>
<dbReference type="GO" id="GO:0030686">
    <property type="term" value="C:90S preribosome"/>
    <property type="evidence" value="ECO:0007669"/>
    <property type="project" value="TreeGrafter"/>
</dbReference>
<dbReference type="GO" id="GO:0005730">
    <property type="term" value="C:nucleolus"/>
    <property type="evidence" value="ECO:0007669"/>
    <property type="project" value="UniProtKB-SubCell"/>
</dbReference>
<dbReference type="GO" id="GO:0030688">
    <property type="term" value="C:preribosome, small subunit precursor"/>
    <property type="evidence" value="ECO:0007669"/>
    <property type="project" value="TreeGrafter"/>
</dbReference>
<dbReference type="GO" id="GO:0003723">
    <property type="term" value="F:RNA binding"/>
    <property type="evidence" value="ECO:0007669"/>
    <property type="project" value="InterPro"/>
</dbReference>
<dbReference type="GO" id="GO:0000480">
    <property type="term" value="P:endonucleolytic cleavage in 5'-ETS of tricistronic rRNA transcript (SSU-rRNA, 5.8S rRNA, LSU-rRNA)"/>
    <property type="evidence" value="ECO:0007669"/>
    <property type="project" value="TreeGrafter"/>
</dbReference>
<dbReference type="GO" id="GO:0000447">
    <property type="term" value="P:endonucleolytic cleavage in ITS1 to separate SSU-rRNA from 5.8S rRNA and LSU-rRNA from tricistronic rRNA transcript (SSU-rRNA, 5.8S rRNA, LSU-rRNA)"/>
    <property type="evidence" value="ECO:0007669"/>
    <property type="project" value="TreeGrafter"/>
</dbReference>
<dbReference type="GO" id="GO:0000472">
    <property type="term" value="P:endonucleolytic cleavage to generate mature 5'-end of SSU-rRNA from (SSU-rRNA, 5.8S rRNA, LSU-rRNA)"/>
    <property type="evidence" value="ECO:0007669"/>
    <property type="project" value="TreeGrafter"/>
</dbReference>
<dbReference type="GO" id="GO:0000056">
    <property type="term" value="P:ribosomal small subunit export from nucleus"/>
    <property type="evidence" value="ECO:0007669"/>
    <property type="project" value="TreeGrafter"/>
</dbReference>
<dbReference type="Gene3D" id="1.25.10.10">
    <property type="entry name" value="Leucine-rich Repeat Variant"/>
    <property type="match status" value="2"/>
</dbReference>
<dbReference type="InterPro" id="IPR011989">
    <property type="entry name" value="ARM-like"/>
</dbReference>
<dbReference type="InterPro" id="IPR016024">
    <property type="entry name" value="ARM-type_fold"/>
</dbReference>
<dbReference type="InterPro" id="IPR040000">
    <property type="entry name" value="NOP9"/>
</dbReference>
<dbReference type="InterPro" id="IPR001313">
    <property type="entry name" value="Pumilio_RNA-bd_rpt"/>
</dbReference>
<dbReference type="PANTHER" id="PTHR13102">
    <property type="entry name" value="NUCLEOLAR PROTEIN 9"/>
    <property type="match status" value="1"/>
</dbReference>
<dbReference type="PANTHER" id="PTHR13102:SF0">
    <property type="entry name" value="NUCLEOLAR PROTEIN 9"/>
    <property type="match status" value="1"/>
</dbReference>
<dbReference type="Pfam" id="PF22493">
    <property type="entry name" value="PUF_NOP9"/>
    <property type="match status" value="1"/>
</dbReference>
<dbReference type="SMART" id="SM00025">
    <property type="entry name" value="Pumilio"/>
    <property type="match status" value="6"/>
</dbReference>
<dbReference type="SUPFAM" id="SSF48371">
    <property type="entry name" value="ARM repeat"/>
    <property type="match status" value="1"/>
</dbReference>
<protein>
    <recommendedName>
        <fullName>Nucleolar protein 9</fullName>
    </recommendedName>
    <alternativeName>
        <fullName>Pumilio domain-containing protein nop9</fullName>
    </alternativeName>
</protein>
<proteinExistence type="inferred from homology"/>
<evidence type="ECO:0000250" key="1"/>
<evidence type="ECO:0000256" key="2">
    <source>
        <dbReference type="SAM" id="MobiDB-lite"/>
    </source>
</evidence>
<evidence type="ECO:0000305" key="3"/>
<gene>
    <name type="primary">nop9</name>
    <name type="ORF">AFLA_031520</name>
</gene>
<feature type="chain" id="PRO_0000407798" description="Nucleolar protein 9">
    <location>
        <begin position="1"/>
        <end position="707"/>
    </location>
</feature>
<feature type="repeat" description="Pumilio 1">
    <location>
        <begin position="122"/>
        <end position="157"/>
    </location>
</feature>
<feature type="repeat" description="Pumilio 2">
    <location>
        <begin position="158"/>
        <end position="193"/>
    </location>
</feature>
<feature type="repeat" description="Pumilio 3">
    <location>
        <begin position="365"/>
        <end position="400"/>
    </location>
</feature>
<feature type="repeat" description="Pumilio 4">
    <location>
        <begin position="401"/>
        <end position="437"/>
    </location>
</feature>
<feature type="repeat" description="Pumilio 5">
    <location>
        <begin position="548"/>
        <end position="588"/>
    </location>
</feature>
<feature type="repeat" description="Pumilio 6">
    <location>
        <begin position="590"/>
        <end position="627"/>
    </location>
</feature>
<feature type="region of interest" description="Disordered" evidence="2">
    <location>
        <begin position="1"/>
        <end position="77"/>
    </location>
</feature>
<feature type="region of interest" description="Disordered" evidence="2">
    <location>
        <begin position="268"/>
        <end position="287"/>
    </location>
</feature>
<feature type="region of interest" description="Disordered" evidence="2">
    <location>
        <begin position="497"/>
        <end position="523"/>
    </location>
</feature>
<feature type="compositionally biased region" description="Basic and acidic residues" evidence="2">
    <location>
        <begin position="1"/>
        <end position="27"/>
    </location>
</feature>
<feature type="compositionally biased region" description="Low complexity" evidence="2">
    <location>
        <begin position="57"/>
        <end position="66"/>
    </location>
</feature>